<evidence type="ECO:0000250" key="1"/>
<evidence type="ECO:0000255" key="2"/>
<evidence type="ECO:0000255" key="3">
    <source>
        <dbReference type="PROSITE-ProRule" id="PRU01118"/>
    </source>
</evidence>
<evidence type="ECO:0000256" key="4">
    <source>
        <dbReference type="SAM" id="MobiDB-lite"/>
    </source>
</evidence>
<evidence type="ECO:0000269" key="5">
    <source>
    </source>
</evidence>
<evidence type="ECO:0000269" key="6">
    <source>
    </source>
</evidence>
<gene>
    <name type="primary">ebpS</name>
    <name type="ordered locus">SAOUHSC_01501</name>
</gene>
<keyword id="KW-1003">Cell membrane</keyword>
<keyword id="KW-0472">Membrane</keyword>
<keyword id="KW-1185">Reference proteome</keyword>
<keyword id="KW-0812">Transmembrane</keyword>
<keyword id="KW-1133">Transmembrane helix</keyword>
<accession>Q2FYF1</accession>
<accession>Q93D59</accession>
<dbReference type="EMBL" id="AF400161">
    <property type="protein sequence ID" value="AAL00934.1"/>
    <property type="molecule type" value="Genomic_DNA"/>
</dbReference>
<dbReference type="EMBL" id="CP000253">
    <property type="protein sequence ID" value="ABD30585.1"/>
    <property type="molecule type" value="Genomic_DNA"/>
</dbReference>
<dbReference type="RefSeq" id="WP_000069282.1">
    <property type="nucleotide sequence ID" value="NZ_LS483365.1"/>
</dbReference>
<dbReference type="RefSeq" id="YP_500019.1">
    <property type="nucleotide sequence ID" value="NC_007795.1"/>
</dbReference>
<dbReference type="SMR" id="Q2FYF1"/>
<dbReference type="STRING" id="93061.SAOUHSC_01501"/>
<dbReference type="PaxDb" id="1280-SAXN108_1502"/>
<dbReference type="GeneID" id="3919044"/>
<dbReference type="KEGG" id="sao:SAOUHSC_01501"/>
<dbReference type="PATRIC" id="fig|93061.5.peg.1366"/>
<dbReference type="eggNOG" id="COG1388">
    <property type="taxonomic scope" value="Bacteria"/>
</dbReference>
<dbReference type="HOGENOM" id="CLU_043950_0_0_9"/>
<dbReference type="OrthoDB" id="2583609at2"/>
<dbReference type="PRO" id="PR:Q2FYF1"/>
<dbReference type="Proteomes" id="UP000008816">
    <property type="component" value="Chromosome"/>
</dbReference>
<dbReference type="GO" id="GO:0005886">
    <property type="term" value="C:plasma membrane"/>
    <property type="evidence" value="ECO:0007669"/>
    <property type="project" value="UniProtKB-SubCell"/>
</dbReference>
<dbReference type="CDD" id="cd00118">
    <property type="entry name" value="LysM"/>
    <property type="match status" value="1"/>
</dbReference>
<dbReference type="Gene3D" id="3.10.350.10">
    <property type="entry name" value="LysM domain"/>
    <property type="match status" value="1"/>
</dbReference>
<dbReference type="InterPro" id="IPR018392">
    <property type="entry name" value="LysM_dom"/>
</dbReference>
<dbReference type="InterPro" id="IPR036779">
    <property type="entry name" value="LysM_dom_sf"/>
</dbReference>
<dbReference type="NCBIfam" id="NF033598">
    <property type="entry name" value="elast_bind_EbpS"/>
    <property type="match status" value="1"/>
</dbReference>
<dbReference type="Pfam" id="PF01476">
    <property type="entry name" value="LysM"/>
    <property type="match status" value="1"/>
</dbReference>
<dbReference type="SMART" id="SM00257">
    <property type="entry name" value="LysM"/>
    <property type="match status" value="1"/>
</dbReference>
<dbReference type="SUPFAM" id="SSF54106">
    <property type="entry name" value="LysM domain"/>
    <property type="match status" value="1"/>
</dbReference>
<dbReference type="PROSITE" id="PS51782">
    <property type="entry name" value="LYSM"/>
    <property type="match status" value="1"/>
</dbReference>
<sequence length="486" mass="53221">MSNNFKDDFEKNRQSIDTNSHQDHTEDVEKDQSELEHQDTIENTEQQFPPRNAQRRKRRRDLATNHNKQVHNESQTSEDNVQNEAGTIDDRQVESSHSTESQEPSHQDSTPQHEEEYYNKNAFAMDKSHPEPIEDNDKHDTIKNAENNTEHSTVSDKSEAEQSQQPKPYFTTGANQSETSKNEHDNDSVKQDQDEPKEHHNGKKAAAIGAGTAGVAGAAGAMAASKAKKHSNDAQNKSNSGKANNSTEDKASQDKSKDHHNGKKGAAIGAGTAGLAGGAASKSASAASKPHASNNASQNHDEHDNHDRDKERKKGGMAKVLLPLIAAVLIIGALAIFGGMALNNHNNGTKENKIANTNKNNADESKDKDTSKDASKDKSKSTDSDKSKEDQDKATKDESDNDQNNANQANNQAQNNQNQQQANQNQQQQQQRQGGGQRHTVNGQENLYRIAIQYYGSGSPENVEKIRRANGLSGNNIRNGQQIVIP</sequence>
<name>EBPS_STAA8</name>
<proteinExistence type="evidence at protein level"/>
<protein>
    <recommendedName>
        <fullName>Elastin-binding protein EbpS</fullName>
    </recommendedName>
</protein>
<reference key="1">
    <citation type="journal article" date="2002" name="J. Biol. Chem.">
        <title>The elastin-binding protein of Staphylococcus aureus (EbpS) is expressed at the cell surface as an integral membrane protein and not as a cell-wall associated protein.</title>
        <authorList>
            <person name="Downer R."/>
            <person name="Roche F.M."/>
            <person name="Park P.W."/>
            <person name="Mecham R.P."/>
            <person name="Foster T.J."/>
        </authorList>
    </citation>
    <scope>NUCLEOTIDE SEQUENCE [GENOMIC DNA]</scope>
    <scope>FUNCTION</scope>
    <scope>TOPOLOGY</scope>
</reference>
<reference key="2">
    <citation type="book" date="2006" name="Gram positive pathogens, 2nd edition">
        <title>The Staphylococcus aureus NCTC 8325 genome.</title>
        <editorList>
            <person name="Fischetti V."/>
            <person name="Novick R."/>
            <person name="Ferretti J."/>
            <person name="Portnoy D."/>
            <person name="Rood J."/>
        </editorList>
        <authorList>
            <person name="Gillaspy A.F."/>
            <person name="Worrell V."/>
            <person name="Orvis J."/>
            <person name="Roe B.A."/>
            <person name="Dyer D.W."/>
            <person name="Iandolo J.J."/>
        </authorList>
    </citation>
    <scope>NUCLEOTIDE SEQUENCE [LARGE SCALE GENOMIC DNA]</scope>
    <source>
        <strain>NCTC 8325 / PS 47</strain>
    </source>
</reference>
<reference key="3">
    <citation type="journal article" date="2004" name="J. Biol. Chem.">
        <title>The N-terminal A domain of fibronectin-binding proteins A and B promotes adhesion of Staphylococcus aureus to elastin.</title>
        <authorList>
            <person name="Roche F.M."/>
            <person name="Downer R."/>
            <person name="Keane F."/>
            <person name="Speziale P."/>
            <person name="Park P.W."/>
            <person name="Foster T.J."/>
        </authorList>
    </citation>
    <scope>FUNCTION</scope>
</reference>
<organism>
    <name type="scientific">Staphylococcus aureus (strain NCTC 8325 / PS 47)</name>
    <dbReference type="NCBI Taxonomy" id="93061"/>
    <lineage>
        <taxon>Bacteria</taxon>
        <taxon>Bacillati</taxon>
        <taxon>Bacillota</taxon>
        <taxon>Bacilli</taxon>
        <taxon>Bacillales</taxon>
        <taxon>Staphylococcaceae</taxon>
        <taxon>Staphylococcus</taxon>
    </lineage>
</organism>
<feature type="initiator methionine" description="Removed" evidence="1">
    <location>
        <position position="1"/>
    </location>
</feature>
<feature type="chain" id="PRO_0000271739" description="Elastin-binding protein EbpS">
    <location>
        <begin position="2"/>
        <end position="486"/>
    </location>
</feature>
<feature type="topological domain" description="Extracellular" evidence="2">
    <location>
        <begin position="2"/>
        <end position="204"/>
    </location>
</feature>
<feature type="transmembrane region" description="Helical" evidence="2">
    <location>
        <begin position="205"/>
        <end position="225"/>
    </location>
</feature>
<feature type="topological domain" description="Cytoplasmic" evidence="2">
    <location>
        <begin position="226"/>
        <end position="319"/>
    </location>
</feature>
<feature type="transmembrane region" description="Helical" evidence="2">
    <location>
        <begin position="320"/>
        <end position="340"/>
    </location>
</feature>
<feature type="topological domain" description="Extracellular" evidence="2">
    <location>
        <begin position="341"/>
        <end position="486"/>
    </location>
</feature>
<feature type="domain" description="LysM" evidence="3">
    <location>
        <begin position="437"/>
        <end position="485"/>
    </location>
</feature>
<feature type="region of interest" description="Disordered" evidence="4">
    <location>
        <begin position="1"/>
        <end position="314"/>
    </location>
</feature>
<feature type="region of interest" description="Elastin-binding" evidence="1">
    <location>
        <begin position="14"/>
        <end position="34"/>
    </location>
</feature>
<feature type="region of interest" description="Disordered" evidence="4">
    <location>
        <begin position="351"/>
        <end position="440"/>
    </location>
</feature>
<feature type="compositionally biased region" description="Basic and acidic residues" evidence="4">
    <location>
        <begin position="1"/>
        <end position="40"/>
    </location>
</feature>
<feature type="compositionally biased region" description="Polar residues" evidence="4">
    <location>
        <begin position="64"/>
        <end position="85"/>
    </location>
</feature>
<feature type="compositionally biased region" description="Basic and acidic residues" evidence="4">
    <location>
        <begin position="103"/>
        <end position="118"/>
    </location>
</feature>
<feature type="compositionally biased region" description="Basic and acidic residues" evidence="4">
    <location>
        <begin position="126"/>
        <end position="143"/>
    </location>
</feature>
<feature type="compositionally biased region" description="Polar residues" evidence="4">
    <location>
        <begin position="161"/>
        <end position="179"/>
    </location>
</feature>
<feature type="compositionally biased region" description="Basic and acidic residues" evidence="4">
    <location>
        <begin position="180"/>
        <end position="199"/>
    </location>
</feature>
<feature type="compositionally biased region" description="Low complexity" evidence="4">
    <location>
        <begin position="204"/>
        <end position="225"/>
    </location>
</feature>
<feature type="compositionally biased region" description="Polar residues" evidence="4">
    <location>
        <begin position="233"/>
        <end position="246"/>
    </location>
</feature>
<feature type="compositionally biased region" description="Basic and acidic residues" evidence="4">
    <location>
        <begin position="247"/>
        <end position="259"/>
    </location>
</feature>
<feature type="compositionally biased region" description="Low complexity" evidence="4">
    <location>
        <begin position="278"/>
        <end position="297"/>
    </location>
</feature>
<feature type="compositionally biased region" description="Basic and acidic residues" evidence="4">
    <location>
        <begin position="299"/>
        <end position="314"/>
    </location>
</feature>
<feature type="compositionally biased region" description="Basic and acidic residues" evidence="4">
    <location>
        <begin position="361"/>
        <end position="398"/>
    </location>
</feature>
<feature type="compositionally biased region" description="Low complexity" evidence="4">
    <location>
        <begin position="403"/>
        <end position="431"/>
    </location>
</feature>
<comment type="function">
    <text evidence="5 6">Promotes binding of soluble elastin peptides and tropoelastin to S.aureus cells although it is not able to promote bacterial adherence to immobilized elastin and, therefore, is not a microbial surface component recognizing adhesive matrix molecule (MSCRAMM). May be involved in sensing the environment or in nutrient transport, since its loss caused a growth defect.</text>
</comment>
<comment type="subcellular location">
    <subcellularLocation>
        <location evidence="1">Cell membrane</location>
        <topology evidence="1">Multi-pass membrane protein</topology>
    </subcellularLocation>
</comment>
<comment type="domain">
    <text evidence="1">The elastin-binding domain is located between residues 13-33 at the surface-exposed N-terminus, whereas the C-terminus, containing the LysM peptidoglycan-binding domain, is not exposed on the surface of intact cells and presumably remains buried within the peptidoglycan. The presence of the TNSHQD sequence, corresponding to residues 18-23, is essential for EbpS activity but not sufficient, additional flanking amino acids in the amino- or carboxy-terminal are required for elastin recognition (By similarity).</text>
</comment>